<evidence type="ECO:0000255" key="1"/>
<evidence type="ECO:0000305" key="2"/>
<comment type="subcellular location">
    <subcellularLocation>
        <location evidence="2">Cell membrane</location>
        <topology evidence="2">Multi-pass membrane protein</topology>
    </subcellularLocation>
</comment>
<comment type="similarity">
    <text evidence="2">Belongs to the arsenical resistance-3 (ACR3) (TC 2.A.59) family.</text>
</comment>
<feature type="chain" id="PRO_0000157880" description="Uncharacterized transporter slr0944">
    <location>
        <begin position="1"/>
        <end position="383"/>
    </location>
</feature>
<feature type="transmembrane region" description="Helical" evidence="1">
    <location>
        <begin position="25"/>
        <end position="45"/>
    </location>
</feature>
<feature type="transmembrane region" description="Helical" evidence="1">
    <location>
        <begin position="53"/>
        <end position="73"/>
    </location>
</feature>
<feature type="transmembrane region" description="Helical" evidence="1">
    <location>
        <begin position="103"/>
        <end position="123"/>
    </location>
</feature>
<feature type="transmembrane region" description="Helical" evidence="1">
    <location>
        <begin position="139"/>
        <end position="159"/>
    </location>
</feature>
<feature type="transmembrane region" description="Helical" evidence="1">
    <location>
        <begin position="166"/>
        <end position="186"/>
    </location>
</feature>
<feature type="transmembrane region" description="Helical" evidence="1">
    <location>
        <begin position="200"/>
        <end position="220"/>
    </location>
</feature>
<feature type="transmembrane region" description="Helical" evidence="1">
    <location>
        <begin position="238"/>
        <end position="258"/>
    </location>
</feature>
<feature type="transmembrane region" description="Helical" evidence="1">
    <location>
        <begin position="272"/>
        <end position="292"/>
    </location>
</feature>
<feature type="transmembrane region" description="Helical" evidence="1">
    <location>
        <begin position="309"/>
        <end position="329"/>
    </location>
</feature>
<feature type="transmembrane region" description="Helical" evidence="1">
    <location>
        <begin position="332"/>
        <end position="352"/>
    </location>
</feature>
<sequence>MVNRINPKAIKAGGTLNLFEKYLTLWVALCIVIGIALGKLLPAVAQTLDSWSIYNVSIPIAICLFFMMYPIMVKIDFSQARQAVKAPKPVILTLVVNWVIKPFTMVIFAQFFLGYLFAPLLTATEIIRGQEVTLANSYIAGCILLGIAPCTAMVLMWGYLSYSNQGLTLVMVAVNSLAMLFLYAPLGKWLLAASNLTVPWQTIVLSVLIYVGLPLAAGIYSRYWILKHKGRQWFESQFLHYLSPIAIVALLLTLILLFAFKGELIVNNPLHIFLIAVPLFIQTNFIFLITYVLGLKLKLSYEDAAPAALIGASNHFEVAIATAVMLFGLNSGAALATVVGVLIEVPVMLMLVEICKKTAFWFPRDPEKATLLDPRCINQEIRI</sequence>
<reference key="1">
    <citation type="journal article" date="1996" name="DNA Res.">
        <title>Sequence analysis of the genome of the unicellular cyanobacterium Synechocystis sp. strain PCC6803. II. Sequence determination of the entire genome and assignment of potential protein-coding regions.</title>
        <authorList>
            <person name="Kaneko T."/>
            <person name="Sato S."/>
            <person name="Kotani H."/>
            <person name="Tanaka A."/>
            <person name="Asamizu E."/>
            <person name="Nakamura Y."/>
            <person name="Miyajima N."/>
            <person name="Hirosawa M."/>
            <person name="Sugiura M."/>
            <person name="Sasamoto S."/>
            <person name="Kimura T."/>
            <person name="Hosouchi T."/>
            <person name="Matsuno A."/>
            <person name="Muraki A."/>
            <person name="Nakazaki N."/>
            <person name="Naruo K."/>
            <person name="Okumura S."/>
            <person name="Shimpo S."/>
            <person name="Takeuchi C."/>
            <person name="Wada T."/>
            <person name="Watanabe A."/>
            <person name="Yamada M."/>
            <person name="Yasuda M."/>
            <person name="Tabata S."/>
        </authorList>
    </citation>
    <scope>NUCLEOTIDE SEQUENCE [LARGE SCALE GENOMIC DNA]</scope>
    <source>
        <strain>ATCC 27184 / PCC 6803 / Kazusa</strain>
    </source>
</reference>
<protein>
    <recommendedName>
        <fullName>Uncharacterized transporter slr0944</fullName>
    </recommendedName>
</protein>
<gene>
    <name type="ordered locus">slr0944</name>
</gene>
<dbReference type="EMBL" id="BA000022">
    <property type="protein sequence ID" value="BAA18405.1"/>
    <property type="molecule type" value="Genomic_DNA"/>
</dbReference>
<dbReference type="PIR" id="S76146">
    <property type="entry name" value="S76146"/>
</dbReference>
<dbReference type="SMR" id="P74311"/>
<dbReference type="FunCoup" id="P74311">
    <property type="interactions" value="146"/>
</dbReference>
<dbReference type="STRING" id="1148.gene:10499281"/>
<dbReference type="PaxDb" id="1148-1653492"/>
<dbReference type="DNASU" id="952983"/>
<dbReference type="EnsemblBacteria" id="BAA18405">
    <property type="protein sequence ID" value="BAA18405"/>
    <property type="gene ID" value="BAA18405"/>
</dbReference>
<dbReference type="KEGG" id="syn:slr0944"/>
<dbReference type="eggNOG" id="COG0798">
    <property type="taxonomic scope" value="Bacteria"/>
</dbReference>
<dbReference type="InParanoid" id="P74311"/>
<dbReference type="PhylomeDB" id="P74311"/>
<dbReference type="Proteomes" id="UP000001425">
    <property type="component" value="Chromosome"/>
</dbReference>
<dbReference type="GO" id="GO:0005886">
    <property type="term" value="C:plasma membrane"/>
    <property type="evidence" value="ECO:0000318"/>
    <property type="project" value="GO_Central"/>
</dbReference>
<dbReference type="GO" id="GO:0015104">
    <property type="term" value="F:antimonite transmembrane transporter activity"/>
    <property type="evidence" value="ECO:0000318"/>
    <property type="project" value="GO_Central"/>
</dbReference>
<dbReference type="GO" id="GO:0015297">
    <property type="term" value="F:antiporter activity"/>
    <property type="evidence" value="ECO:0000318"/>
    <property type="project" value="GO_Central"/>
</dbReference>
<dbReference type="GO" id="GO:0015105">
    <property type="term" value="F:arsenite transmembrane transporter activity"/>
    <property type="evidence" value="ECO:0000318"/>
    <property type="project" value="GO_Central"/>
</dbReference>
<dbReference type="GO" id="GO:0015699">
    <property type="term" value="P:antimonite transmembrane transport"/>
    <property type="evidence" value="ECO:0000318"/>
    <property type="project" value="GO_Central"/>
</dbReference>
<dbReference type="GO" id="GO:0015700">
    <property type="term" value="P:arsenite transport"/>
    <property type="evidence" value="ECO:0000318"/>
    <property type="project" value="GO_Central"/>
</dbReference>
<dbReference type="FunFam" id="1.20.1530.20:FF:000020">
    <property type="entry name" value="Arsenical-resistance membrane protein"/>
    <property type="match status" value="1"/>
</dbReference>
<dbReference type="Gene3D" id="1.20.1530.20">
    <property type="match status" value="1"/>
</dbReference>
<dbReference type="InterPro" id="IPR004706">
    <property type="entry name" value="Arsenical-R_Acr3"/>
</dbReference>
<dbReference type="InterPro" id="IPR002657">
    <property type="entry name" value="BilAc:Na_symport/Acr3"/>
</dbReference>
<dbReference type="InterPro" id="IPR038770">
    <property type="entry name" value="Na+/solute_symporter_sf"/>
</dbReference>
<dbReference type="NCBIfam" id="TIGR00832">
    <property type="entry name" value="acr3"/>
    <property type="match status" value="1"/>
</dbReference>
<dbReference type="PANTHER" id="PTHR43057:SF1">
    <property type="entry name" value="ARSENICAL-RESISTANCE PROTEIN 3"/>
    <property type="match status" value="1"/>
</dbReference>
<dbReference type="PANTHER" id="PTHR43057">
    <property type="entry name" value="ARSENITE EFFLUX TRANSPORTER"/>
    <property type="match status" value="1"/>
</dbReference>
<dbReference type="Pfam" id="PF01758">
    <property type="entry name" value="SBF"/>
    <property type="match status" value="1"/>
</dbReference>
<dbReference type="PIRSF" id="PIRSF005508">
    <property type="entry name" value="Acr3"/>
    <property type="match status" value="1"/>
</dbReference>
<proteinExistence type="inferred from homology"/>
<accession>P74311</accession>
<organism>
    <name type="scientific">Synechocystis sp. (strain ATCC 27184 / PCC 6803 / Kazusa)</name>
    <dbReference type="NCBI Taxonomy" id="1111708"/>
    <lineage>
        <taxon>Bacteria</taxon>
        <taxon>Bacillati</taxon>
        <taxon>Cyanobacteriota</taxon>
        <taxon>Cyanophyceae</taxon>
        <taxon>Synechococcales</taxon>
        <taxon>Merismopediaceae</taxon>
        <taxon>Synechocystis</taxon>
    </lineage>
</organism>
<name>Y944_SYNY3</name>
<keyword id="KW-1003">Cell membrane</keyword>
<keyword id="KW-0472">Membrane</keyword>
<keyword id="KW-1185">Reference proteome</keyword>
<keyword id="KW-0812">Transmembrane</keyword>
<keyword id="KW-1133">Transmembrane helix</keyword>
<keyword id="KW-0813">Transport</keyword>